<feature type="chain" id="PRO_0000311588" description="Transposase InsD for insertion element IS2A/D/F/H/I/K">
    <location>
        <begin position="1"/>
        <end position="301"/>
    </location>
</feature>
<feature type="domain" description="Integrase catalytic" evidence="2">
    <location>
        <begin position="106"/>
        <end position="289"/>
    </location>
</feature>
<keyword id="KW-0233">DNA recombination</keyword>
<keyword id="KW-0238">DNA-binding</keyword>
<keyword id="KW-0814">Transposable element</keyword>
<keyword id="KW-0815">Transposition</keyword>
<gene>
    <name type="primary">insD</name>
</gene>
<evidence type="ECO:0000250" key="1"/>
<evidence type="ECO:0000255" key="2">
    <source>
        <dbReference type="PROSITE-ProRule" id="PRU00457"/>
    </source>
</evidence>
<sequence>MDSARALIARGWGVSLVSRCLRVSRAQLHVILRRTDDWMDGRRSRHTDDTDVLLRIHHVIGELPTYGYRRVWALLRRQAELDGMPAINAKRVYRIMRQNALLLERKPAVPPSKRAHTGRVAVKESNQRWCSDGFEFCCDNGERLRVTFALDCCDREALHWAVTTGGFNSETVQDVMLGAVERRFGNDLPSSPVEWLTDNGSCYRANETRQFARMLGLEPKNTAVRSPESNGIAESFVKTIKRDYISIMPKPDGLTAAKNLAEAFEHYNEWHPHSALGYRSPREYLRQRACNGLSDNRCLEI</sequence>
<protein>
    <recommendedName>
        <fullName>Transposase InsD for insertion element IS2A/D/F/H/I/K</fullName>
    </recommendedName>
</protein>
<proteinExistence type="inferred from homology"/>
<name>INSD_ECOLX</name>
<dbReference type="EMBL" id="V00279">
    <property type="protein sequence ID" value="CAA23541.1"/>
    <property type="molecule type" value="Genomic_DNA"/>
</dbReference>
<dbReference type="PIR" id="A64764">
    <property type="entry name" value="C65092"/>
</dbReference>
<dbReference type="RefSeq" id="WP_000376502.1">
    <property type="nucleotide sequence ID" value="NZ_JBIGXO010000001.1"/>
</dbReference>
<dbReference type="RefSeq" id="YP_424823.1">
    <property type="nucleotide sequence ID" value="NC_007635.1"/>
</dbReference>
<dbReference type="SMR" id="P0C5W5"/>
<dbReference type="IntAct" id="P0C5W5">
    <property type="interactions" value="2"/>
</dbReference>
<dbReference type="OMA" id="CHDREAI"/>
<dbReference type="GO" id="GO:0003677">
    <property type="term" value="F:DNA binding"/>
    <property type="evidence" value="ECO:0007669"/>
    <property type="project" value="UniProtKB-KW"/>
</dbReference>
<dbReference type="GO" id="GO:0015074">
    <property type="term" value="P:DNA integration"/>
    <property type="evidence" value="ECO:0007669"/>
    <property type="project" value="InterPro"/>
</dbReference>
<dbReference type="GO" id="GO:0006310">
    <property type="term" value="P:DNA recombination"/>
    <property type="evidence" value="ECO:0007669"/>
    <property type="project" value="UniProtKB-KW"/>
</dbReference>
<dbReference type="GO" id="GO:0032196">
    <property type="term" value="P:transposition"/>
    <property type="evidence" value="ECO:0007669"/>
    <property type="project" value="UniProtKB-KW"/>
</dbReference>
<dbReference type="Gene3D" id="3.30.420.10">
    <property type="entry name" value="Ribonuclease H-like superfamily/Ribonuclease H"/>
    <property type="match status" value="1"/>
</dbReference>
<dbReference type="InterPro" id="IPR025948">
    <property type="entry name" value="HTH-like_dom"/>
</dbReference>
<dbReference type="InterPro" id="IPR001584">
    <property type="entry name" value="Integrase_cat-core"/>
</dbReference>
<dbReference type="InterPro" id="IPR012337">
    <property type="entry name" value="RNaseH-like_sf"/>
</dbReference>
<dbReference type="InterPro" id="IPR036397">
    <property type="entry name" value="RNaseH_sf"/>
</dbReference>
<dbReference type="InterPro" id="IPR048020">
    <property type="entry name" value="Transpos_IS3"/>
</dbReference>
<dbReference type="NCBIfam" id="NF006918">
    <property type="entry name" value="PRK09409.1"/>
    <property type="match status" value="1"/>
</dbReference>
<dbReference type="NCBIfam" id="NF033516">
    <property type="entry name" value="transpos_IS3"/>
    <property type="match status" value="1"/>
</dbReference>
<dbReference type="PANTHER" id="PTHR37936">
    <property type="entry name" value="TRANSPOSASE INSC FOR INSERTION ELEMENT IS2A-RELATED"/>
    <property type="match status" value="1"/>
</dbReference>
<dbReference type="PANTHER" id="PTHR37936:SF3">
    <property type="entry name" value="TRANSPOSASE INSC FOR INSERTION ELEMENT IS2A-RELATED"/>
    <property type="match status" value="1"/>
</dbReference>
<dbReference type="Pfam" id="PF13276">
    <property type="entry name" value="HTH_21"/>
    <property type="match status" value="1"/>
</dbReference>
<dbReference type="Pfam" id="PF00665">
    <property type="entry name" value="rve"/>
    <property type="match status" value="1"/>
</dbReference>
<dbReference type="SUPFAM" id="SSF53098">
    <property type="entry name" value="Ribonuclease H-like"/>
    <property type="match status" value="1"/>
</dbReference>
<dbReference type="PROSITE" id="PS50994">
    <property type="entry name" value="INTEGRASE"/>
    <property type="match status" value="1"/>
</dbReference>
<accession>P0C5W5</accession>
<accession>P19777</accession>
<accession>P76167</accession>
<accession>P76916</accession>
<accession>P77033</accession>
<accession>Q79EJ0</accession>
<reference key="1">
    <citation type="journal article" date="1987" name="Gene">
        <title>Genetic organization of insertion element IS2 based on a revised nucleotide sequence.</title>
        <authorList>
            <person name="Ronecker H.J."/>
            <person name="Rak B."/>
        </authorList>
    </citation>
    <scope>NUCLEOTIDE SEQUENCE [GENOMIC DNA]</scope>
    <source>
        <strain>ATCC 33694 / HB101</strain>
    </source>
</reference>
<comment type="function">
    <text evidence="1">Involved in the transposition of the insertion sequence IS2.</text>
</comment>
<organism>
    <name type="scientific">Escherichia coli</name>
    <dbReference type="NCBI Taxonomy" id="562"/>
    <lineage>
        <taxon>Bacteria</taxon>
        <taxon>Pseudomonadati</taxon>
        <taxon>Pseudomonadota</taxon>
        <taxon>Gammaproteobacteria</taxon>
        <taxon>Enterobacterales</taxon>
        <taxon>Enterobacteriaceae</taxon>
        <taxon>Escherichia</taxon>
    </lineage>
</organism>